<keyword id="KW-0030">Aminoacyl-tRNA synthetase</keyword>
<keyword id="KW-0067">ATP-binding</keyword>
<keyword id="KW-0963">Cytoplasm</keyword>
<keyword id="KW-0436">Ligase</keyword>
<keyword id="KW-0479">Metal-binding</keyword>
<keyword id="KW-0547">Nucleotide-binding</keyword>
<keyword id="KW-0648">Protein biosynthesis</keyword>
<keyword id="KW-1185">Reference proteome</keyword>
<keyword id="KW-0694">RNA-binding</keyword>
<keyword id="KW-0820">tRNA-binding</keyword>
<keyword id="KW-0862">Zinc</keyword>
<reference key="1">
    <citation type="submission" date="2007-10" db="EMBL/GenBank/DDBJ databases">
        <title>Complete sequence of chromosome of Desulforudis audaxviator MP104C.</title>
        <authorList>
            <person name="Copeland A."/>
            <person name="Lucas S."/>
            <person name="Lapidus A."/>
            <person name="Barry K."/>
            <person name="Glavina del Rio T."/>
            <person name="Dalin E."/>
            <person name="Tice H."/>
            <person name="Bruce D."/>
            <person name="Pitluck S."/>
            <person name="Lowry S.R."/>
            <person name="Larimer F."/>
            <person name="Land M.L."/>
            <person name="Hauser L."/>
            <person name="Kyrpides N."/>
            <person name="Ivanova N.N."/>
            <person name="Richardson P."/>
        </authorList>
    </citation>
    <scope>NUCLEOTIDE SEQUENCE [LARGE SCALE GENOMIC DNA]</scope>
    <source>
        <strain>MP104C</strain>
    </source>
</reference>
<gene>
    <name evidence="1" type="primary">alaS</name>
    <name type="ordered locus">Daud_0912</name>
</gene>
<feature type="chain" id="PRO_0000347585" description="Alanine--tRNA ligase">
    <location>
        <begin position="1"/>
        <end position="880"/>
    </location>
</feature>
<feature type="binding site" evidence="1">
    <location>
        <position position="563"/>
    </location>
    <ligand>
        <name>Zn(2+)</name>
        <dbReference type="ChEBI" id="CHEBI:29105"/>
    </ligand>
</feature>
<feature type="binding site" evidence="1">
    <location>
        <position position="567"/>
    </location>
    <ligand>
        <name>Zn(2+)</name>
        <dbReference type="ChEBI" id="CHEBI:29105"/>
    </ligand>
</feature>
<feature type="binding site" evidence="1">
    <location>
        <position position="665"/>
    </location>
    <ligand>
        <name>Zn(2+)</name>
        <dbReference type="ChEBI" id="CHEBI:29105"/>
    </ligand>
</feature>
<feature type="binding site" evidence="1">
    <location>
        <position position="669"/>
    </location>
    <ligand>
        <name>Zn(2+)</name>
        <dbReference type="ChEBI" id="CHEBI:29105"/>
    </ligand>
</feature>
<protein>
    <recommendedName>
        <fullName evidence="1">Alanine--tRNA ligase</fullName>
        <ecNumber evidence="1">6.1.1.7</ecNumber>
    </recommendedName>
    <alternativeName>
        <fullName evidence="1">Alanyl-tRNA synthetase</fullName>
        <shortName evidence="1">AlaRS</shortName>
    </alternativeName>
</protein>
<proteinExistence type="inferred from homology"/>
<comment type="function">
    <text evidence="1">Catalyzes the attachment of alanine to tRNA(Ala) in a two-step reaction: alanine is first activated by ATP to form Ala-AMP and then transferred to the acceptor end of tRNA(Ala). Also edits incorrectly charged Ser-tRNA(Ala) and Gly-tRNA(Ala) via its editing domain.</text>
</comment>
<comment type="catalytic activity">
    <reaction evidence="1">
        <text>tRNA(Ala) + L-alanine + ATP = L-alanyl-tRNA(Ala) + AMP + diphosphate</text>
        <dbReference type="Rhea" id="RHEA:12540"/>
        <dbReference type="Rhea" id="RHEA-COMP:9657"/>
        <dbReference type="Rhea" id="RHEA-COMP:9923"/>
        <dbReference type="ChEBI" id="CHEBI:30616"/>
        <dbReference type="ChEBI" id="CHEBI:33019"/>
        <dbReference type="ChEBI" id="CHEBI:57972"/>
        <dbReference type="ChEBI" id="CHEBI:78442"/>
        <dbReference type="ChEBI" id="CHEBI:78497"/>
        <dbReference type="ChEBI" id="CHEBI:456215"/>
        <dbReference type="EC" id="6.1.1.7"/>
    </reaction>
</comment>
<comment type="cofactor">
    <cofactor evidence="1">
        <name>Zn(2+)</name>
        <dbReference type="ChEBI" id="CHEBI:29105"/>
    </cofactor>
    <text evidence="1">Binds 1 zinc ion per subunit.</text>
</comment>
<comment type="subcellular location">
    <subcellularLocation>
        <location evidence="1">Cytoplasm</location>
    </subcellularLocation>
</comment>
<comment type="domain">
    <text evidence="1">Consists of three domains; the N-terminal catalytic domain, the editing domain and the C-terminal C-Ala domain. The editing domain removes incorrectly charged amino acids, while the C-Ala domain, along with tRNA(Ala), serves as a bridge to cooperatively bring together the editing and aminoacylation centers thus stimulating deacylation of misacylated tRNAs.</text>
</comment>
<comment type="similarity">
    <text evidence="1">Belongs to the class-II aminoacyl-tRNA synthetase family.</text>
</comment>
<evidence type="ECO:0000255" key="1">
    <source>
        <dbReference type="HAMAP-Rule" id="MF_00036"/>
    </source>
</evidence>
<name>SYA_DESAP</name>
<accession>B1I370</accession>
<organism>
    <name type="scientific">Desulforudis audaxviator (strain MP104C)</name>
    <dbReference type="NCBI Taxonomy" id="477974"/>
    <lineage>
        <taxon>Bacteria</taxon>
        <taxon>Bacillati</taxon>
        <taxon>Bacillota</taxon>
        <taxon>Clostridia</taxon>
        <taxon>Thermoanaerobacterales</taxon>
        <taxon>Candidatus Desulforudaceae</taxon>
        <taxon>Candidatus Desulforudis</taxon>
    </lineage>
</organism>
<sequence>MNSSEIRKRYLEFFAARGHRVIPSASLIPGNDPTLLWTSAGMVPFKPYFTGVATPEFRRVVTCQKCLRTPDIEMVGRTARHHTFFEMLGNFSFGDYFKERAIPWAWEFVTRDLGLAPEHLWISVYLDDNEAFDHWRGLGVPAERIVRLGRDTNFWEIGVGPCGPCSEVYYDRGPAYGCESASCGPGCDCDRWLEIWNLVFIQYFRNEAGDYSPLESPGIDTGMGLERVASVLQGVNTNFDTDLFRGLIDYTAGVLGVRYGDDPAGDAALKVIADHGRAITFAIADGVLPSNEGRGYVIRRLLRRAVRKALLLGREKPFLEGVALAVIEQMAGAYPELETARDSVRKVVRFEEERFRQTLTQGNEIIGRLIAEARAEKRSTLEGAAAFQLYDTYGFPLELTREICAEQGLAVDEAGFEAALKAQQQKARSSRRETRYVEERETFFRNLRDEIGLTRFVGYEQLEADAGVRALIRDGQRVPAAGSGEQVSLVVDTTPCYAESGGQVGDHGLIEGENVRGRITDTFAPVEGLHVHEVVVEAGVLEEGARIRILVDGSRRRKICRNHTATHLLHRTLKAVLGTHVNQAGSLVAPERLRFDFTHIQPLSEAELAEVESRINEIVLSNLRVESFQTSFDRARELGAVALFGEKYGDLVRVVQIDGVSMELCGGTHVLSTAEIGPVKITAESSVGAGLRRLEAVTGMEALAFLNSRNEQLHRIAQAVRVPVSELVVHVERLLDHQKKLQRENEQLQDRLQVYEVKELLDRASTHEGVRILATSVRARDMAELRSMLDLLRERLGSAVIVLGSAVNGKVSLVASVSRDLVARGLHAGAIIKEAAAVAGGGGGGRPEMAQAGGKNPEKLTEALEKARQVVLRRVDGGSA</sequence>
<dbReference type="EC" id="6.1.1.7" evidence="1"/>
<dbReference type="EMBL" id="CP000860">
    <property type="protein sequence ID" value="ACA59425.1"/>
    <property type="molecule type" value="Genomic_DNA"/>
</dbReference>
<dbReference type="RefSeq" id="WP_012302011.1">
    <property type="nucleotide sequence ID" value="NC_010424.1"/>
</dbReference>
<dbReference type="SMR" id="B1I370"/>
<dbReference type="STRING" id="477974.Daud_0912"/>
<dbReference type="KEGG" id="dau:Daud_0912"/>
<dbReference type="eggNOG" id="COG0013">
    <property type="taxonomic scope" value="Bacteria"/>
</dbReference>
<dbReference type="HOGENOM" id="CLU_004485_1_1_9"/>
<dbReference type="OrthoDB" id="9803884at2"/>
<dbReference type="Proteomes" id="UP000008544">
    <property type="component" value="Chromosome"/>
</dbReference>
<dbReference type="GO" id="GO:0005829">
    <property type="term" value="C:cytosol"/>
    <property type="evidence" value="ECO:0007669"/>
    <property type="project" value="TreeGrafter"/>
</dbReference>
<dbReference type="GO" id="GO:0004813">
    <property type="term" value="F:alanine-tRNA ligase activity"/>
    <property type="evidence" value="ECO:0007669"/>
    <property type="project" value="UniProtKB-UniRule"/>
</dbReference>
<dbReference type="GO" id="GO:0002161">
    <property type="term" value="F:aminoacyl-tRNA deacylase activity"/>
    <property type="evidence" value="ECO:0007669"/>
    <property type="project" value="TreeGrafter"/>
</dbReference>
<dbReference type="GO" id="GO:0005524">
    <property type="term" value="F:ATP binding"/>
    <property type="evidence" value="ECO:0007669"/>
    <property type="project" value="UniProtKB-UniRule"/>
</dbReference>
<dbReference type="GO" id="GO:0140096">
    <property type="term" value="F:catalytic activity, acting on a protein"/>
    <property type="evidence" value="ECO:0007669"/>
    <property type="project" value="UniProtKB-ARBA"/>
</dbReference>
<dbReference type="GO" id="GO:0016740">
    <property type="term" value="F:transferase activity"/>
    <property type="evidence" value="ECO:0007669"/>
    <property type="project" value="UniProtKB-ARBA"/>
</dbReference>
<dbReference type="GO" id="GO:0000049">
    <property type="term" value="F:tRNA binding"/>
    <property type="evidence" value="ECO:0007669"/>
    <property type="project" value="UniProtKB-KW"/>
</dbReference>
<dbReference type="GO" id="GO:0008270">
    <property type="term" value="F:zinc ion binding"/>
    <property type="evidence" value="ECO:0007669"/>
    <property type="project" value="UniProtKB-UniRule"/>
</dbReference>
<dbReference type="GO" id="GO:0006419">
    <property type="term" value="P:alanyl-tRNA aminoacylation"/>
    <property type="evidence" value="ECO:0007669"/>
    <property type="project" value="UniProtKB-UniRule"/>
</dbReference>
<dbReference type="CDD" id="cd00673">
    <property type="entry name" value="AlaRS_core"/>
    <property type="match status" value="1"/>
</dbReference>
<dbReference type="FunFam" id="3.10.310.40:FF:000001">
    <property type="entry name" value="Alanine--tRNA ligase"/>
    <property type="match status" value="1"/>
</dbReference>
<dbReference type="FunFam" id="3.30.54.20:FF:000001">
    <property type="entry name" value="Alanine--tRNA ligase"/>
    <property type="match status" value="1"/>
</dbReference>
<dbReference type="FunFam" id="3.30.930.10:FF:000004">
    <property type="entry name" value="Alanine--tRNA ligase"/>
    <property type="match status" value="1"/>
</dbReference>
<dbReference type="FunFam" id="3.30.980.10:FF:000004">
    <property type="entry name" value="Alanine--tRNA ligase, cytoplasmic"/>
    <property type="match status" value="1"/>
</dbReference>
<dbReference type="Gene3D" id="2.40.30.130">
    <property type="match status" value="1"/>
</dbReference>
<dbReference type="Gene3D" id="3.10.310.40">
    <property type="match status" value="1"/>
</dbReference>
<dbReference type="Gene3D" id="3.30.54.20">
    <property type="match status" value="1"/>
</dbReference>
<dbReference type="Gene3D" id="6.10.250.550">
    <property type="match status" value="1"/>
</dbReference>
<dbReference type="Gene3D" id="3.30.930.10">
    <property type="entry name" value="Bira Bifunctional Protein, Domain 2"/>
    <property type="match status" value="1"/>
</dbReference>
<dbReference type="Gene3D" id="3.30.980.10">
    <property type="entry name" value="Threonyl-trna Synthetase, Chain A, domain 2"/>
    <property type="match status" value="1"/>
</dbReference>
<dbReference type="HAMAP" id="MF_00036_B">
    <property type="entry name" value="Ala_tRNA_synth_B"/>
    <property type="match status" value="1"/>
</dbReference>
<dbReference type="InterPro" id="IPR045864">
    <property type="entry name" value="aa-tRNA-synth_II/BPL/LPL"/>
</dbReference>
<dbReference type="InterPro" id="IPR002318">
    <property type="entry name" value="Ala-tRNA-lgiase_IIc"/>
</dbReference>
<dbReference type="InterPro" id="IPR018162">
    <property type="entry name" value="Ala-tRNA-ligase_IIc_anticod-bd"/>
</dbReference>
<dbReference type="InterPro" id="IPR018165">
    <property type="entry name" value="Ala-tRNA-synth_IIc_core"/>
</dbReference>
<dbReference type="InterPro" id="IPR018164">
    <property type="entry name" value="Ala-tRNA-synth_IIc_N"/>
</dbReference>
<dbReference type="InterPro" id="IPR050058">
    <property type="entry name" value="Ala-tRNA_ligase"/>
</dbReference>
<dbReference type="InterPro" id="IPR023033">
    <property type="entry name" value="Ala_tRNA_ligase_euk/bac"/>
</dbReference>
<dbReference type="InterPro" id="IPR003156">
    <property type="entry name" value="DHHA1_dom"/>
</dbReference>
<dbReference type="InterPro" id="IPR018163">
    <property type="entry name" value="Thr/Ala-tRNA-synth_IIc_edit"/>
</dbReference>
<dbReference type="InterPro" id="IPR009000">
    <property type="entry name" value="Transl_B-barrel_sf"/>
</dbReference>
<dbReference type="InterPro" id="IPR012947">
    <property type="entry name" value="tRNA_SAD"/>
</dbReference>
<dbReference type="NCBIfam" id="TIGR00344">
    <property type="entry name" value="alaS"/>
    <property type="match status" value="1"/>
</dbReference>
<dbReference type="PANTHER" id="PTHR11777:SF9">
    <property type="entry name" value="ALANINE--TRNA LIGASE, CYTOPLASMIC"/>
    <property type="match status" value="1"/>
</dbReference>
<dbReference type="PANTHER" id="PTHR11777">
    <property type="entry name" value="ALANYL-TRNA SYNTHETASE"/>
    <property type="match status" value="1"/>
</dbReference>
<dbReference type="Pfam" id="PF02272">
    <property type="entry name" value="DHHA1"/>
    <property type="match status" value="1"/>
</dbReference>
<dbReference type="Pfam" id="PF01411">
    <property type="entry name" value="tRNA-synt_2c"/>
    <property type="match status" value="1"/>
</dbReference>
<dbReference type="Pfam" id="PF07973">
    <property type="entry name" value="tRNA_SAD"/>
    <property type="match status" value="1"/>
</dbReference>
<dbReference type="PRINTS" id="PR00980">
    <property type="entry name" value="TRNASYNTHALA"/>
</dbReference>
<dbReference type="SMART" id="SM00863">
    <property type="entry name" value="tRNA_SAD"/>
    <property type="match status" value="1"/>
</dbReference>
<dbReference type="SUPFAM" id="SSF55681">
    <property type="entry name" value="Class II aaRS and biotin synthetases"/>
    <property type="match status" value="1"/>
</dbReference>
<dbReference type="SUPFAM" id="SSF101353">
    <property type="entry name" value="Putative anticodon-binding domain of alanyl-tRNA synthetase (AlaRS)"/>
    <property type="match status" value="1"/>
</dbReference>
<dbReference type="SUPFAM" id="SSF55186">
    <property type="entry name" value="ThrRS/AlaRS common domain"/>
    <property type="match status" value="1"/>
</dbReference>
<dbReference type="SUPFAM" id="SSF50447">
    <property type="entry name" value="Translation proteins"/>
    <property type="match status" value="1"/>
</dbReference>
<dbReference type="PROSITE" id="PS50860">
    <property type="entry name" value="AA_TRNA_LIGASE_II_ALA"/>
    <property type="match status" value="1"/>
</dbReference>